<keyword id="KW-0137">Centromere</keyword>
<keyword id="KW-0158">Chromosome</keyword>
<keyword id="KW-0963">Cytoplasm</keyword>
<keyword id="KW-0206">Cytoskeleton</keyword>
<keyword id="KW-0995">Kinetochore</keyword>
<keyword id="KW-1185">Reference proteome</keyword>
<name>DCTN6_XENTR</name>
<proteinExistence type="evidence at transcript level"/>
<evidence type="ECO:0000250" key="1"/>
<evidence type="ECO:0000250" key="2">
    <source>
        <dbReference type="UniProtKB" id="O00399"/>
    </source>
</evidence>
<evidence type="ECO:0000305" key="3"/>
<dbReference type="EMBL" id="CR848630">
    <property type="protein sequence ID" value="CAJ83606.1"/>
    <property type="molecule type" value="mRNA"/>
</dbReference>
<dbReference type="EMBL" id="BC135759">
    <property type="protein sequence ID" value="AAI35760.1"/>
    <property type="molecule type" value="mRNA"/>
</dbReference>
<dbReference type="RefSeq" id="NP_001039059.1">
    <property type="nucleotide sequence ID" value="NM_001045594.1"/>
</dbReference>
<dbReference type="SMR" id="Q28DR7"/>
<dbReference type="FunCoup" id="Q28DR7">
    <property type="interactions" value="1072"/>
</dbReference>
<dbReference type="STRING" id="8364.ENSXETP00000019674"/>
<dbReference type="PaxDb" id="8364-ENSXETP00000022598"/>
<dbReference type="DNASU" id="733845"/>
<dbReference type="GeneID" id="733845"/>
<dbReference type="KEGG" id="xtr:733845"/>
<dbReference type="AGR" id="Xenbase:XB-GENE-5784833"/>
<dbReference type="CTD" id="10671"/>
<dbReference type="eggNOG" id="KOG4042">
    <property type="taxonomic scope" value="Eukaryota"/>
</dbReference>
<dbReference type="HOGENOM" id="CLU_085418_1_0_1"/>
<dbReference type="InParanoid" id="Q28DR7"/>
<dbReference type="OMA" id="ITMQAET"/>
<dbReference type="OrthoDB" id="2355at2759"/>
<dbReference type="PhylomeDB" id="Q28DR7"/>
<dbReference type="TreeFam" id="TF352888"/>
<dbReference type="Proteomes" id="UP000008143">
    <property type="component" value="Chromosome 1"/>
</dbReference>
<dbReference type="GO" id="GO:0005737">
    <property type="term" value="C:cytoplasm"/>
    <property type="evidence" value="ECO:0007669"/>
    <property type="project" value="UniProtKB-KW"/>
</dbReference>
<dbReference type="GO" id="GO:0005869">
    <property type="term" value="C:dynactin complex"/>
    <property type="evidence" value="ECO:0007669"/>
    <property type="project" value="InterPro"/>
</dbReference>
<dbReference type="GO" id="GO:0000776">
    <property type="term" value="C:kinetochore"/>
    <property type="evidence" value="ECO:0007669"/>
    <property type="project" value="UniProtKB-KW"/>
</dbReference>
<dbReference type="CDD" id="cd04646">
    <property type="entry name" value="LbH_Dynactin_6"/>
    <property type="match status" value="1"/>
</dbReference>
<dbReference type="Gene3D" id="2.160.10.10">
    <property type="entry name" value="Hexapeptide repeat proteins"/>
    <property type="match status" value="1"/>
</dbReference>
<dbReference type="InterPro" id="IPR027777">
    <property type="entry name" value="DCTN6"/>
</dbReference>
<dbReference type="InterPro" id="IPR011004">
    <property type="entry name" value="Trimer_LpxA-like_sf"/>
</dbReference>
<dbReference type="PANTHER" id="PTHR13072">
    <property type="entry name" value="DYNACTIN 6"/>
    <property type="match status" value="1"/>
</dbReference>
<dbReference type="PANTHER" id="PTHR13072:SF0">
    <property type="entry name" value="DYNACTIN SUBUNIT 6"/>
    <property type="match status" value="1"/>
</dbReference>
<dbReference type="SUPFAM" id="SSF51161">
    <property type="entry name" value="Trimeric LpxA-like enzymes"/>
    <property type="match status" value="1"/>
</dbReference>
<reference key="1">
    <citation type="submission" date="2006-10" db="EMBL/GenBank/DDBJ databases">
        <authorList>
            <consortium name="Sanger Xenopus tropicalis EST/cDNA project"/>
        </authorList>
    </citation>
    <scope>NUCLEOTIDE SEQUENCE [LARGE SCALE MRNA]</scope>
    <source>
        <tissue>Gastrula</tissue>
    </source>
</reference>
<reference key="2">
    <citation type="submission" date="2007-03" db="EMBL/GenBank/DDBJ databases">
        <authorList>
            <consortium name="NIH - Xenopus Gene Collection (XGC) project"/>
        </authorList>
    </citation>
    <scope>NUCLEOTIDE SEQUENCE [LARGE SCALE MRNA]</scope>
</reference>
<protein>
    <recommendedName>
        <fullName>Dynactin subunit 6</fullName>
    </recommendedName>
</protein>
<comment type="function">
    <text evidence="2">Part of the dynactin complex that activates the molecular motor dynein for ultra-processive transport along microtubules.</text>
</comment>
<comment type="subunit">
    <text evidence="1">Member of the pointed-end complex of the dynactin shoulder complex which contains dctn4, dctn5 and dctn6 subunits and Actr10. Within the complex dctn6 forms a heterodimer with dctn5. Interacts with plk1 (By similarity).</text>
</comment>
<comment type="subcellular location">
    <subcellularLocation>
        <location evidence="1">Cytoplasm</location>
        <location evidence="1">Cytoskeleton</location>
    </subcellularLocation>
    <subcellularLocation>
        <location evidence="1">Chromosome</location>
        <location evidence="1">Centromere</location>
        <location evidence="1">Kinetochore</location>
    </subcellularLocation>
</comment>
<comment type="similarity">
    <text evidence="3">Belongs to the dynactin subunits 5/6 family. Dynactin subunit 6 subfamily.</text>
</comment>
<accession>Q28DR7</accession>
<feature type="chain" id="PRO_0000327737" description="Dynactin subunit 6">
    <location>
        <begin position="1"/>
        <end position="201"/>
    </location>
</feature>
<gene>
    <name type="primary">dctn6</name>
    <name type="ORF">TGas061c09.1</name>
</gene>
<organism>
    <name type="scientific">Xenopus tropicalis</name>
    <name type="common">Western clawed frog</name>
    <name type="synonym">Silurana tropicalis</name>
    <dbReference type="NCBI Taxonomy" id="8364"/>
    <lineage>
        <taxon>Eukaryota</taxon>
        <taxon>Metazoa</taxon>
        <taxon>Chordata</taxon>
        <taxon>Craniata</taxon>
        <taxon>Vertebrata</taxon>
        <taxon>Euteleostomi</taxon>
        <taxon>Amphibia</taxon>
        <taxon>Batrachia</taxon>
        <taxon>Anura</taxon>
        <taxon>Pipoidea</taxon>
        <taxon>Pipidae</taxon>
        <taxon>Xenopodinae</taxon>
        <taxon>Xenopus</taxon>
        <taxon>Silurana</taxon>
    </lineage>
</organism>
<sequence>MRQDVSLLSTSGSQKNPLGNVKIAPGAVVCVESEIKGDVTIGPRTVVHPKARIYAEAGPIIIGEGNLIEEQAFIRNSFPENIAPDSDVEPKTMIIGTNNVFEVGCYSQAMKMGDNNVIESKAFVGRNVILTSGCIIGACCQVDTCEVIPENTVIYGSDCLRRVQTERPQPQTLQLDFLMKILPNYHHLKKTTKNISTPMKS</sequence>